<evidence type="ECO:0000255" key="1">
    <source>
        <dbReference type="HAMAP-Rule" id="MF_00131"/>
    </source>
</evidence>
<name>TRPA_SALPK</name>
<dbReference type="EC" id="4.2.1.20" evidence="1"/>
<dbReference type="EMBL" id="FM200053">
    <property type="protein sequence ID" value="CAR59223.1"/>
    <property type="molecule type" value="Genomic_DNA"/>
</dbReference>
<dbReference type="RefSeq" id="WP_000443035.1">
    <property type="nucleotide sequence ID" value="NC_011147.1"/>
</dbReference>
<dbReference type="SMR" id="B5BIC0"/>
<dbReference type="KEGG" id="sek:SSPA1069"/>
<dbReference type="HOGENOM" id="CLU_016734_0_4_6"/>
<dbReference type="UniPathway" id="UPA00035">
    <property type="reaction ID" value="UER00044"/>
</dbReference>
<dbReference type="Proteomes" id="UP000001869">
    <property type="component" value="Chromosome"/>
</dbReference>
<dbReference type="GO" id="GO:0005829">
    <property type="term" value="C:cytosol"/>
    <property type="evidence" value="ECO:0007669"/>
    <property type="project" value="TreeGrafter"/>
</dbReference>
<dbReference type="GO" id="GO:0004834">
    <property type="term" value="F:tryptophan synthase activity"/>
    <property type="evidence" value="ECO:0007669"/>
    <property type="project" value="UniProtKB-UniRule"/>
</dbReference>
<dbReference type="CDD" id="cd04724">
    <property type="entry name" value="Tryptophan_synthase_alpha"/>
    <property type="match status" value="1"/>
</dbReference>
<dbReference type="FunFam" id="3.20.20.70:FF:000037">
    <property type="entry name" value="Tryptophan synthase alpha chain"/>
    <property type="match status" value="1"/>
</dbReference>
<dbReference type="Gene3D" id="3.20.20.70">
    <property type="entry name" value="Aldolase class I"/>
    <property type="match status" value="1"/>
</dbReference>
<dbReference type="HAMAP" id="MF_00131">
    <property type="entry name" value="Trp_synth_alpha"/>
    <property type="match status" value="1"/>
</dbReference>
<dbReference type="InterPro" id="IPR013785">
    <property type="entry name" value="Aldolase_TIM"/>
</dbReference>
<dbReference type="InterPro" id="IPR011060">
    <property type="entry name" value="RibuloseP-bd_barrel"/>
</dbReference>
<dbReference type="InterPro" id="IPR018204">
    <property type="entry name" value="Trp_synthase_alpha_AS"/>
</dbReference>
<dbReference type="InterPro" id="IPR002028">
    <property type="entry name" value="Trp_synthase_suA"/>
</dbReference>
<dbReference type="NCBIfam" id="TIGR00262">
    <property type="entry name" value="trpA"/>
    <property type="match status" value="1"/>
</dbReference>
<dbReference type="PANTHER" id="PTHR43406:SF1">
    <property type="entry name" value="TRYPTOPHAN SYNTHASE ALPHA CHAIN, CHLOROPLASTIC"/>
    <property type="match status" value="1"/>
</dbReference>
<dbReference type="PANTHER" id="PTHR43406">
    <property type="entry name" value="TRYPTOPHAN SYNTHASE, ALPHA CHAIN"/>
    <property type="match status" value="1"/>
</dbReference>
<dbReference type="Pfam" id="PF00290">
    <property type="entry name" value="Trp_syntA"/>
    <property type="match status" value="1"/>
</dbReference>
<dbReference type="SUPFAM" id="SSF51366">
    <property type="entry name" value="Ribulose-phoshate binding barrel"/>
    <property type="match status" value="1"/>
</dbReference>
<dbReference type="PROSITE" id="PS00167">
    <property type="entry name" value="TRP_SYNTHASE_ALPHA"/>
    <property type="match status" value="1"/>
</dbReference>
<organism>
    <name type="scientific">Salmonella paratyphi A (strain AKU_12601)</name>
    <dbReference type="NCBI Taxonomy" id="554290"/>
    <lineage>
        <taxon>Bacteria</taxon>
        <taxon>Pseudomonadati</taxon>
        <taxon>Pseudomonadota</taxon>
        <taxon>Gammaproteobacteria</taxon>
        <taxon>Enterobacterales</taxon>
        <taxon>Enterobacteriaceae</taxon>
        <taxon>Salmonella</taxon>
    </lineage>
</organism>
<accession>B5BIC0</accession>
<comment type="function">
    <text evidence="1">The alpha subunit is responsible for the aldol cleavage of indoleglycerol phosphate to indole and glyceraldehyde 3-phosphate.</text>
</comment>
<comment type="catalytic activity">
    <reaction evidence="1">
        <text>(1S,2R)-1-C-(indol-3-yl)glycerol 3-phosphate + L-serine = D-glyceraldehyde 3-phosphate + L-tryptophan + H2O</text>
        <dbReference type="Rhea" id="RHEA:10532"/>
        <dbReference type="ChEBI" id="CHEBI:15377"/>
        <dbReference type="ChEBI" id="CHEBI:33384"/>
        <dbReference type="ChEBI" id="CHEBI:57912"/>
        <dbReference type="ChEBI" id="CHEBI:58866"/>
        <dbReference type="ChEBI" id="CHEBI:59776"/>
        <dbReference type="EC" id="4.2.1.20"/>
    </reaction>
</comment>
<comment type="pathway">
    <text evidence="1">Amino-acid biosynthesis; L-tryptophan biosynthesis; L-tryptophan from chorismate: step 5/5.</text>
</comment>
<comment type="subunit">
    <text evidence="1">Tetramer of two alpha and two beta chains.</text>
</comment>
<comment type="similarity">
    <text evidence="1">Belongs to the TrpA family.</text>
</comment>
<reference key="1">
    <citation type="journal article" date="2009" name="BMC Genomics">
        <title>Pseudogene accumulation in the evolutionary histories of Salmonella enterica serovars Paratyphi A and Typhi.</title>
        <authorList>
            <person name="Holt K.E."/>
            <person name="Thomson N.R."/>
            <person name="Wain J."/>
            <person name="Langridge G.C."/>
            <person name="Hasan R."/>
            <person name="Bhutta Z.A."/>
            <person name="Quail M.A."/>
            <person name="Norbertczak H."/>
            <person name="Walker D."/>
            <person name="Simmonds M."/>
            <person name="White B."/>
            <person name="Bason N."/>
            <person name="Mungall K."/>
            <person name="Dougan G."/>
            <person name="Parkhill J."/>
        </authorList>
    </citation>
    <scope>NUCLEOTIDE SEQUENCE [LARGE SCALE GENOMIC DNA]</scope>
    <source>
        <strain>AKU_12601</strain>
    </source>
</reference>
<feature type="chain" id="PRO_1000095752" description="Tryptophan synthase alpha chain">
    <location>
        <begin position="1"/>
        <end position="268"/>
    </location>
</feature>
<feature type="active site" description="Proton acceptor" evidence="1">
    <location>
        <position position="49"/>
    </location>
</feature>
<feature type="active site" description="Proton acceptor" evidence="1">
    <location>
        <position position="60"/>
    </location>
</feature>
<proteinExistence type="inferred from homology"/>
<keyword id="KW-0028">Amino-acid biosynthesis</keyword>
<keyword id="KW-0057">Aromatic amino acid biosynthesis</keyword>
<keyword id="KW-0456">Lyase</keyword>
<keyword id="KW-0822">Tryptophan biosynthesis</keyword>
<protein>
    <recommendedName>
        <fullName evidence="1">Tryptophan synthase alpha chain</fullName>
        <ecNumber evidence="1">4.2.1.20</ecNumber>
    </recommendedName>
</protein>
<gene>
    <name evidence="1" type="primary">trpA</name>
    <name type="ordered locus">SSPA1069</name>
</gene>
<sequence>MERYENLFAQLNDRREGAFVPFVTLGDPGIEQSLKIIDTLIDAGANALELGVPFSDPLADGPTIQNANLRAFAAGVTPAQCFEMLALIREKHPTIPIGLLMYANLVFNNGIDAFYARCEQVGVDSVLVADVPVEESAPFRQAALRHNIAPIFICPPNADDDLLRQVASYGRGYTYLLSRSGVTGAENRGALPLHHLIEKLKEYHAAPALQGFGISSPEQVSAAVRAGAAGAISGSAIVKIIEKNLASPEQMLAELRSFVSAMKAASRA</sequence>